<comment type="function">
    <text evidence="1">Component of chylomicrons, very low-density lipoproteins (VLDL), low-density lipoproteins (LDL), and high-density lipoproteins (HDL) in plasma. Plays an important role in lipoprotein metabolism as an activator of lipoprotein lipase. Both proapolipoprotein C-II and apolipoprotein C-II can activate lipoprotein lipase.</text>
</comment>
<comment type="subcellular location">
    <subcellularLocation>
        <location evidence="1">Secreted</location>
    </subcellularLocation>
</comment>
<comment type="PTM">
    <text evidence="1">Proapolipoprotein C-II is synthesized as a sialic acid containing glycoprotein which is subsequently desialylated prior to its proteolytic processing.</text>
</comment>
<comment type="PTM">
    <text evidence="1">Proapolipoprotein C-II, the major form found in plasma undergoes proteolytic cleavage of its N-terminal hexapeptide to generate apolipoprotein C-II, which occurs as the minor form in plasma.</text>
</comment>
<comment type="similarity">
    <text evidence="3">Belongs to the apolipoprotein C2 family.</text>
</comment>
<proteinExistence type="inferred from homology"/>
<name>APOC2_PAPHA</name>
<evidence type="ECO:0000250" key="1">
    <source>
        <dbReference type="UniProtKB" id="P02655"/>
    </source>
</evidence>
<evidence type="ECO:0000255" key="2"/>
<evidence type="ECO:0000305" key="3"/>
<keyword id="KW-0162">Chylomicron</keyword>
<keyword id="KW-0325">Glycoprotein</keyword>
<keyword id="KW-0345">HDL</keyword>
<keyword id="KW-0427">LDL</keyword>
<keyword id="KW-0442">Lipid degradation</keyword>
<keyword id="KW-0443">Lipid metabolism</keyword>
<keyword id="KW-0445">Lipid transport</keyword>
<keyword id="KW-0964">Secreted</keyword>
<keyword id="KW-0730">Sialic acid</keyword>
<keyword id="KW-0732">Signal</keyword>
<keyword id="KW-0813">Transport</keyword>
<keyword id="KW-0850">VLDL</keyword>
<sequence>MGTRFLLALCLVLLVLGFEVQGAQLPQQDERPSPALLSQVQESLSSYWESAKAAAQKLYEKTYLPAVDEKLRDLYSKSTAAMSTYTGIFTDQVLSVLKGEE</sequence>
<dbReference type="EMBL" id="AC145523">
    <property type="status" value="NOT_ANNOTATED_CDS"/>
    <property type="molecule type" value="Genomic_DNA"/>
</dbReference>
<dbReference type="SMR" id="P0DKY1"/>
<dbReference type="GO" id="GO:0042627">
    <property type="term" value="C:chylomicron"/>
    <property type="evidence" value="ECO:0007669"/>
    <property type="project" value="UniProtKB-KW"/>
</dbReference>
<dbReference type="GO" id="GO:0034364">
    <property type="term" value="C:high-density lipoprotein particle"/>
    <property type="evidence" value="ECO:0007669"/>
    <property type="project" value="UniProtKB-KW"/>
</dbReference>
<dbReference type="GO" id="GO:0034362">
    <property type="term" value="C:low-density lipoprotein particle"/>
    <property type="evidence" value="ECO:0007669"/>
    <property type="project" value="UniProtKB-KW"/>
</dbReference>
<dbReference type="GO" id="GO:0034361">
    <property type="term" value="C:very-low-density lipoprotein particle"/>
    <property type="evidence" value="ECO:0007669"/>
    <property type="project" value="UniProtKB-KW"/>
</dbReference>
<dbReference type="GO" id="GO:0016004">
    <property type="term" value="F:phospholipase activator activity"/>
    <property type="evidence" value="ECO:0007669"/>
    <property type="project" value="TreeGrafter"/>
</dbReference>
<dbReference type="GO" id="GO:0043274">
    <property type="term" value="F:phospholipase binding"/>
    <property type="evidence" value="ECO:0007669"/>
    <property type="project" value="TreeGrafter"/>
</dbReference>
<dbReference type="GO" id="GO:0016042">
    <property type="term" value="P:lipid catabolic process"/>
    <property type="evidence" value="ECO:0007669"/>
    <property type="project" value="UniProtKB-KW"/>
</dbReference>
<dbReference type="GO" id="GO:0006869">
    <property type="term" value="P:lipid transport"/>
    <property type="evidence" value="ECO:0007669"/>
    <property type="project" value="UniProtKB-KW"/>
</dbReference>
<dbReference type="GO" id="GO:0060697">
    <property type="term" value="P:positive regulation of phospholipid catabolic process"/>
    <property type="evidence" value="ECO:0007669"/>
    <property type="project" value="TreeGrafter"/>
</dbReference>
<dbReference type="FunFam" id="1.10.1440.10:FF:000001">
    <property type="entry name" value="Apolipoprotein C-II"/>
    <property type="match status" value="1"/>
</dbReference>
<dbReference type="Gene3D" id="1.10.1440.10">
    <property type="entry name" value="Apolipoprotein C-II"/>
    <property type="match status" value="1"/>
</dbReference>
<dbReference type="InterPro" id="IPR008019">
    <property type="entry name" value="Apo-CII"/>
</dbReference>
<dbReference type="InterPro" id="IPR023121">
    <property type="entry name" value="ApoC-II_dom_sf"/>
</dbReference>
<dbReference type="PANTHER" id="PTHR16566">
    <property type="entry name" value="APOLIPOPROTEIN C-II"/>
    <property type="match status" value="1"/>
</dbReference>
<dbReference type="PANTHER" id="PTHR16566:SF0">
    <property type="entry name" value="APOLIPOPROTEIN C-II"/>
    <property type="match status" value="1"/>
</dbReference>
<dbReference type="Pfam" id="PF05355">
    <property type="entry name" value="Apo-CII"/>
    <property type="match status" value="1"/>
</dbReference>
<protein>
    <recommendedName>
        <fullName>Apolipoprotein C-II</fullName>
        <shortName>Apo-CII</shortName>
        <shortName>ApoC-II</shortName>
    </recommendedName>
    <alternativeName>
        <fullName>Apolipoprotein C2</fullName>
    </alternativeName>
    <component>
        <recommendedName>
            <fullName>Proapolipoprotein C-II</fullName>
            <shortName>ProapoC-II</shortName>
        </recommendedName>
    </component>
</protein>
<feature type="signal peptide" evidence="2">
    <location>
        <begin position="1"/>
        <end position="22"/>
    </location>
</feature>
<feature type="chain" id="PRO_0000421379" description="Proapolipoprotein C-II">
    <location>
        <begin position="23"/>
        <end position="101"/>
    </location>
</feature>
<feature type="chain" id="PRO_0000430842" description="Apolipoprotein C-II" evidence="1">
    <location>
        <begin position="29"/>
        <end position="101"/>
    </location>
</feature>
<feature type="region of interest" description="Lipid binding" evidence="1">
    <location>
        <begin position="66"/>
        <end position="74"/>
    </location>
</feature>
<feature type="region of interest" description="Lipoprotein lipase cofactor" evidence="1">
    <location>
        <begin position="78"/>
        <end position="101"/>
    </location>
</feature>
<accession>P0DKY1</accession>
<gene>
    <name type="primary">APOC2</name>
</gene>
<organism>
    <name type="scientific">Papio hamadryas</name>
    <name type="common">Hamadryas baboon</name>
    <dbReference type="NCBI Taxonomy" id="9557"/>
    <lineage>
        <taxon>Eukaryota</taxon>
        <taxon>Metazoa</taxon>
        <taxon>Chordata</taxon>
        <taxon>Craniata</taxon>
        <taxon>Vertebrata</taxon>
        <taxon>Euteleostomi</taxon>
        <taxon>Mammalia</taxon>
        <taxon>Eutheria</taxon>
        <taxon>Euarchontoglires</taxon>
        <taxon>Primates</taxon>
        <taxon>Haplorrhini</taxon>
        <taxon>Catarrhini</taxon>
        <taxon>Cercopithecidae</taxon>
        <taxon>Cercopithecinae</taxon>
        <taxon>Papio</taxon>
    </lineage>
</organism>
<reference key="1">
    <citation type="submission" date="2003-07" db="EMBL/GenBank/DDBJ databases">
        <authorList>
            <person name="Cheng J.-F."/>
            <person name="Hamilton M."/>
            <person name="Peng Y."/>
            <person name="Hosseini R."/>
            <person name="Peng Z."/>
            <person name="Malinov I."/>
            <person name="Rubin E.M."/>
        </authorList>
    </citation>
    <scope>NUCLEOTIDE SEQUENCE [LARGE SCALE GENOMIC DNA]</scope>
</reference>
<reference key="2">
    <citation type="unpublished observations" date="2012-12">
        <authorList>
            <person name="Puppione D.L."/>
        </authorList>
    </citation>
    <scope>IDENTIFICATION</scope>
</reference>